<protein>
    <recommendedName>
        <fullName>Coat protein</fullName>
    </recommendedName>
    <alternativeName>
        <fullName>Capsid protein</fullName>
        <shortName>CP</shortName>
    </alternativeName>
</protein>
<reference key="1">
    <citation type="journal article" date="1990" name="Virus Res.">
        <title>Complete cDNA sequence of a South American isolate of potato virus X.</title>
        <authorList>
            <person name="Orman B.E."/>
            <person name="Celnik R.M."/>
            <person name="Mandel A.M."/>
            <person name="Torres H.N."/>
            <person name="Mentaberry A.N."/>
        </authorList>
    </citation>
    <scope>NUCLEOTIDE SEQUENCE [GENOMIC RNA]</scope>
</reference>
<reference key="2">
    <citation type="journal article" date="2005" name="Mol. Plant Microbe Interact.">
        <title>A new cell-to-cell transport model for Potexviruses.</title>
        <authorList>
            <person name="Verchot-Lubicz J."/>
        </authorList>
    </citation>
    <scope>REVIEW</scope>
</reference>
<evidence type="ECO:0000256" key="1">
    <source>
        <dbReference type="SAM" id="MobiDB-lite"/>
    </source>
</evidence>
<evidence type="ECO:0000305" key="2"/>
<organismHost>
    <name type="scientific">Brassica campestris</name>
    <name type="common">Field mustard</name>
    <dbReference type="NCBI Taxonomy" id="3711"/>
</organismHost>
<organismHost>
    <name type="scientific">Solanum tuberosum</name>
    <name type="common">Potato</name>
    <dbReference type="NCBI Taxonomy" id="4113"/>
</organismHost>
<keyword id="KW-0167">Capsid protein</keyword>
<keyword id="KW-1139">Helical capsid protein</keyword>
<keyword id="KW-0687">Ribonucleoprotein</keyword>
<keyword id="KW-0946">Virion</keyword>
<sequence length="236" mass="24986">MTTPANTTQAVGSTKSTTTTTAGATPANSGLFTIPDGDFFSTAKAVVASNAVATNEDLAKIQEIWKDKKIPSDTMAQAAWDLVRHCADVGSSAQTEMIGTGPYSNGVSRARLAAAIKEVCTLRQFCKKYAPVVWNWMLTNNSPPANWQAQGFKPEHKFAAFDFFDGVTNPAAITPKEGLMRPPSEAEMNAAQTAAFVKITKARAQSNDFASLDAAVTRGRITGTTVAEAVVSLPPP</sequence>
<accession>P62406</accession>
<organism>
    <name type="scientific">Potato virus X (strain CP)</name>
    <name type="common">PVX</name>
    <dbReference type="NCBI Taxonomy" id="12184"/>
    <lineage>
        <taxon>Viruses</taxon>
        <taxon>Riboviria</taxon>
        <taxon>Orthornavirae</taxon>
        <taxon>Kitrinoviricota</taxon>
        <taxon>Alsuviricetes</taxon>
        <taxon>Tymovirales</taxon>
        <taxon>Alphaflexiviridae</taxon>
        <taxon>Potexvirus</taxon>
        <taxon>Potato virus X</taxon>
    </lineage>
</organism>
<feature type="chain" id="PRO_0000222629" description="Coat protein">
    <location>
        <begin position="1"/>
        <end position="236"/>
    </location>
</feature>
<feature type="region of interest" description="Disordered" evidence="1">
    <location>
        <begin position="1"/>
        <end position="27"/>
    </location>
</feature>
<feature type="compositionally biased region" description="Low complexity" evidence="1">
    <location>
        <begin position="7"/>
        <end position="27"/>
    </location>
</feature>
<name>CAPSD_PVXCP</name>
<proteinExistence type="inferred from homology"/>
<comment type="function">
    <text>Required for genome encapsidation. Forms ribonucleoprotein complexes along with TGB1 helicase and viral RNA.</text>
</comment>
<comment type="subcellular location">
    <subcellularLocation>
        <location evidence="2">Virion</location>
    </subcellularLocation>
</comment>
<comment type="similarity">
    <text evidence="2">Belongs to the potexvirus capsid protein family.</text>
</comment>
<dbReference type="EMBL" id="X55802">
    <property type="protein sequence ID" value="CAA39328.1"/>
    <property type="molecule type" value="Genomic_RNA"/>
</dbReference>
<dbReference type="SMR" id="P62406"/>
<dbReference type="Proteomes" id="UP000008615">
    <property type="component" value="Genome"/>
</dbReference>
<dbReference type="GO" id="GO:0019029">
    <property type="term" value="C:helical viral capsid"/>
    <property type="evidence" value="ECO:0007669"/>
    <property type="project" value="UniProtKB-KW"/>
</dbReference>
<dbReference type="GO" id="GO:1990904">
    <property type="term" value="C:ribonucleoprotein complex"/>
    <property type="evidence" value="ECO:0007669"/>
    <property type="project" value="UniProtKB-KW"/>
</dbReference>
<dbReference type="GO" id="GO:0005198">
    <property type="term" value="F:structural molecule activity"/>
    <property type="evidence" value="ECO:0007669"/>
    <property type="project" value="InterPro"/>
</dbReference>
<dbReference type="InterPro" id="IPR000052">
    <property type="entry name" value="Pltvir_coat"/>
</dbReference>
<dbReference type="Pfam" id="PF00286">
    <property type="entry name" value="Flexi_CP"/>
    <property type="match status" value="1"/>
</dbReference>
<dbReference type="PRINTS" id="PR00232">
    <property type="entry name" value="POTXCARLCOAT"/>
</dbReference>
<dbReference type="PROSITE" id="PS00418">
    <property type="entry name" value="POTEX_CARLAVIRUS_COAT"/>
    <property type="match status" value="1"/>
</dbReference>